<dbReference type="EMBL" id="AK046595">
    <property type="protein sequence ID" value="BAC32800.1"/>
    <property type="status" value="ALT_INIT"/>
    <property type="molecule type" value="mRNA"/>
</dbReference>
<dbReference type="RefSeq" id="NP_001157039.1">
    <property type="nucleotide sequence ID" value="NM_001163567.1"/>
</dbReference>
<dbReference type="FunCoup" id="Q8BQS4">
    <property type="interactions" value="136"/>
</dbReference>
<dbReference type="STRING" id="10090.ENSMUSP00000131904"/>
<dbReference type="GlyGen" id="Q8BQS4">
    <property type="glycosylation" value="1 site"/>
</dbReference>
<dbReference type="iPTMnet" id="Q8BQS4"/>
<dbReference type="PhosphoSitePlus" id="Q8BQS4"/>
<dbReference type="jPOST" id="Q8BQS4"/>
<dbReference type="PaxDb" id="10090-ENSMUSP00000131904"/>
<dbReference type="ProteomicsDB" id="275795"/>
<dbReference type="Pumba" id="Q8BQS4"/>
<dbReference type="Antibodypedia" id="33730">
    <property type="antibodies" value="81 antibodies from 16 providers"/>
</dbReference>
<dbReference type="Ensembl" id="ENSMUST00000046924.10">
    <property type="protein sequence ID" value="ENSMUSP00000039751.4"/>
    <property type="gene ID" value="ENSMUSG00000040339.11"/>
</dbReference>
<dbReference type="GeneID" id="329739"/>
<dbReference type="KEGG" id="mmu:329739"/>
<dbReference type="AGR" id="MGI:3036259"/>
<dbReference type="CTD" id="284611"/>
<dbReference type="MGI" id="MGI:3036259">
    <property type="gene designation" value="Eeig2"/>
</dbReference>
<dbReference type="VEuPathDB" id="HostDB:ENSMUSG00000040339"/>
<dbReference type="eggNOG" id="ENOG502QRRN">
    <property type="taxonomic scope" value="Eukaryota"/>
</dbReference>
<dbReference type="GeneTree" id="ENSGT00940000156132"/>
<dbReference type="InParanoid" id="Q8BQS4"/>
<dbReference type="OrthoDB" id="3365224at2759"/>
<dbReference type="PhylomeDB" id="Q8BQS4"/>
<dbReference type="BioGRID-ORCS" id="329739">
    <property type="hits" value="3 hits in 77 CRISPR screens"/>
</dbReference>
<dbReference type="ChiTaRS" id="Fam102b">
    <property type="organism name" value="mouse"/>
</dbReference>
<dbReference type="PRO" id="PR:Q8BQS4"/>
<dbReference type="Proteomes" id="UP000000589">
    <property type="component" value="Chromosome 3"/>
</dbReference>
<dbReference type="RNAct" id="Q8BQS4">
    <property type="molecule type" value="protein"/>
</dbReference>
<dbReference type="Bgee" id="ENSMUSG00000040339">
    <property type="expression patterns" value="Expressed in trigeminal ganglion and 224 other cell types or tissues"/>
</dbReference>
<dbReference type="ExpressionAtlas" id="Q8BQS4">
    <property type="expression patterns" value="baseline and differential"/>
</dbReference>
<dbReference type="InterPro" id="IPR039931">
    <property type="entry name" value="EEIG1/2-like"/>
</dbReference>
<dbReference type="InterPro" id="IPR019448">
    <property type="entry name" value="NT-C2"/>
</dbReference>
<dbReference type="PANTHER" id="PTHR21456:SF3">
    <property type="entry name" value="EEIG FAMILY MEMBER 2"/>
    <property type="match status" value="1"/>
</dbReference>
<dbReference type="PANTHER" id="PTHR21456">
    <property type="entry name" value="FAMILY WITH SEQUENCE SIMILARITY 102"/>
    <property type="match status" value="1"/>
</dbReference>
<dbReference type="Pfam" id="PF10358">
    <property type="entry name" value="NT-C2"/>
    <property type="match status" value="1"/>
</dbReference>
<dbReference type="PROSITE" id="PS51840">
    <property type="entry name" value="C2_NT"/>
    <property type="match status" value="1"/>
</dbReference>
<feature type="chain" id="PRO_0000236181" description="EEIG family member 2">
    <location>
        <begin position="1"/>
        <end position="339"/>
    </location>
</feature>
<feature type="domain" description="C2 NT-type" evidence="2">
    <location>
        <begin position="1"/>
        <end position="111"/>
    </location>
</feature>
<feature type="region of interest" description="Disordered" evidence="3">
    <location>
        <begin position="226"/>
        <end position="262"/>
    </location>
</feature>
<feature type="compositionally biased region" description="Low complexity" evidence="3">
    <location>
        <begin position="230"/>
        <end position="248"/>
    </location>
</feature>
<feature type="compositionally biased region" description="Basic and acidic residues" evidence="3">
    <location>
        <begin position="249"/>
        <end position="259"/>
    </location>
</feature>
<feature type="modified residue" description="Phosphoserine" evidence="1">
    <location>
        <position position="197"/>
    </location>
</feature>
<feature type="modified residue" description="Phosphoserine" evidence="1">
    <location>
        <position position="255"/>
    </location>
</feature>
<feature type="modified residue" description="Phosphoserine" evidence="1">
    <location>
        <position position="267"/>
    </location>
</feature>
<feature type="modified residue" description="Phosphoserine" evidence="1">
    <location>
        <position position="299"/>
    </location>
</feature>
<feature type="modified residue" description="Phosphoserine" evidence="1">
    <location>
        <position position="300"/>
    </location>
</feature>
<feature type="modified residue" description="Phosphoserine" evidence="1">
    <location>
        <position position="329"/>
    </location>
</feature>
<name>EEIG2_MOUSE</name>
<evidence type="ECO:0000250" key="1">
    <source>
        <dbReference type="UniProtKB" id="Q5T8I3"/>
    </source>
</evidence>
<evidence type="ECO:0000255" key="2">
    <source>
        <dbReference type="PROSITE-ProRule" id="PRU01186"/>
    </source>
</evidence>
<evidence type="ECO:0000256" key="3">
    <source>
        <dbReference type="SAM" id="MobiDB-lite"/>
    </source>
</evidence>
<evidence type="ECO:0000269" key="4">
    <source>
    </source>
</evidence>
<evidence type="ECO:0000305" key="5"/>
<comment type="tissue specificity">
    <text evidence="4">Expressed in bone marrow-derived macrophages.</text>
</comment>
<comment type="similarity">
    <text evidence="5">Belongs to the EEIG family.</text>
</comment>
<comment type="sequence caution" evidence="5">
    <conflict type="erroneous initiation">
        <sequence resource="EMBL-CDS" id="BAC32800"/>
    </conflict>
    <text>Extended N-terminus.</text>
</comment>
<reference key="1">
    <citation type="journal article" date="2005" name="Science">
        <title>The transcriptional landscape of the mammalian genome.</title>
        <authorList>
            <person name="Carninci P."/>
            <person name="Kasukawa T."/>
            <person name="Katayama S."/>
            <person name="Gough J."/>
            <person name="Frith M.C."/>
            <person name="Maeda N."/>
            <person name="Oyama R."/>
            <person name="Ravasi T."/>
            <person name="Lenhard B."/>
            <person name="Wells C."/>
            <person name="Kodzius R."/>
            <person name="Shimokawa K."/>
            <person name="Bajic V.B."/>
            <person name="Brenner S.E."/>
            <person name="Batalov S."/>
            <person name="Forrest A.R."/>
            <person name="Zavolan M."/>
            <person name="Davis M.J."/>
            <person name="Wilming L.G."/>
            <person name="Aidinis V."/>
            <person name="Allen J.E."/>
            <person name="Ambesi-Impiombato A."/>
            <person name="Apweiler R."/>
            <person name="Aturaliya R.N."/>
            <person name="Bailey T.L."/>
            <person name="Bansal M."/>
            <person name="Baxter L."/>
            <person name="Beisel K.W."/>
            <person name="Bersano T."/>
            <person name="Bono H."/>
            <person name="Chalk A.M."/>
            <person name="Chiu K.P."/>
            <person name="Choudhary V."/>
            <person name="Christoffels A."/>
            <person name="Clutterbuck D.R."/>
            <person name="Crowe M.L."/>
            <person name="Dalla E."/>
            <person name="Dalrymple B.P."/>
            <person name="de Bono B."/>
            <person name="Della Gatta G."/>
            <person name="di Bernardo D."/>
            <person name="Down T."/>
            <person name="Engstrom P."/>
            <person name="Fagiolini M."/>
            <person name="Faulkner G."/>
            <person name="Fletcher C.F."/>
            <person name="Fukushima T."/>
            <person name="Furuno M."/>
            <person name="Futaki S."/>
            <person name="Gariboldi M."/>
            <person name="Georgii-Hemming P."/>
            <person name="Gingeras T.R."/>
            <person name="Gojobori T."/>
            <person name="Green R.E."/>
            <person name="Gustincich S."/>
            <person name="Harbers M."/>
            <person name="Hayashi Y."/>
            <person name="Hensch T.K."/>
            <person name="Hirokawa N."/>
            <person name="Hill D."/>
            <person name="Huminiecki L."/>
            <person name="Iacono M."/>
            <person name="Ikeo K."/>
            <person name="Iwama A."/>
            <person name="Ishikawa T."/>
            <person name="Jakt M."/>
            <person name="Kanapin A."/>
            <person name="Katoh M."/>
            <person name="Kawasawa Y."/>
            <person name="Kelso J."/>
            <person name="Kitamura H."/>
            <person name="Kitano H."/>
            <person name="Kollias G."/>
            <person name="Krishnan S.P."/>
            <person name="Kruger A."/>
            <person name="Kummerfeld S.K."/>
            <person name="Kurochkin I.V."/>
            <person name="Lareau L.F."/>
            <person name="Lazarevic D."/>
            <person name="Lipovich L."/>
            <person name="Liu J."/>
            <person name="Liuni S."/>
            <person name="McWilliam S."/>
            <person name="Madan Babu M."/>
            <person name="Madera M."/>
            <person name="Marchionni L."/>
            <person name="Matsuda H."/>
            <person name="Matsuzawa S."/>
            <person name="Miki H."/>
            <person name="Mignone F."/>
            <person name="Miyake S."/>
            <person name="Morris K."/>
            <person name="Mottagui-Tabar S."/>
            <person name="Mulder N."/>
            <person name="Nakano N."/>
            <person name="Nakauchi H."/>
            <person name="Ng P."/>
            <person name="Nilsson R."/>
            <person name="Nishiguchi S."/>
            <person name="Nishikawa S."/>
            <person name="Nori F."/>
            <person name="Ohara O."/>
            <person name="Okazaki Y."/>
            <person name="Orlando V."/>
            <person name="Pang K.C."/>
            <person name="Pavan W.J."/>
            <person name="Pavesi G."/>
            <person name="Pesole G."/>
            <person name="Petrovsky N."/>
            <person name="Piazza S."/>
            <person name="Reed J."/>
            <person name="Reid J.F."/>
            <person name="Ring B.Z."/>
            <person name="Ringwald M."/>
            <person name="Rost B."/>
            <person name="Ruan Y."/>
            <person name="Salzberg S.L."/>
            <person name="Sandelin A."/>
            <person name="Schneider C."/>
            <person name="Schoenbach C."/>
            <person name="Sekiguchi K."/>
            <person name="Semple C.A."/>
            <person name="Seno S."/>
            <person name="Sessa L."/>
            <person name="Sheng Y."/>
            <person name="Shibata Y."/>
            <person name="Shimada H."/>
            <person name="Shimada K."/>
            <person name="Silva D."/>
            <person name="Sinclair B."/>
            <person name="Sperling S."/>
            <person name="Stupka E."/>
            <person name="Sugiura K."/>
            <person name="Sultana R."/>
            <person name="Takenaka Y."/>
            <person name="Taki K."/>
            <person name="Tammoja K."/>
            <person name="Tan S.L."/>
            <person name="Tang S."/>
            <person name="Taylor M.S."/>
            <person name="Tegner J."/>
            <person name="Teichmann S.A."/>
            <person name="Ueda H.R."/>
            <person name="van Nimwegen E."/>
            <person name="Verardo R."/>
            <person name="Wei C.L."/>
            <person name="Yagi K."/>
            <person name="Yamanishi H."/>
            <person name="Zabarovsky E."/>
            <person name="Zhu S."/>
            <person name="Zimmer A."/>
            <person name="Hide W."/>
            <person name="Bult C."/>
            <person name="Grimmond S.M."/>
            <person name="Teasdale R.D."/>
            <person name="Liu E.T."/>
            <person name="Brusic V."/>
            <person name="Quackenbush J."/>
            <person name="Wahlestedt C."/>
            <person name="Mattick J.S."/>
            <person name="Hume D.A."/>
            <person name="Kai C."/>
            <person name="Sasaki D."/>
            <person name="Tomaru Y."/>
            <person name="Fukuda S."/>
            <person name="Kanamori-Katayama M."/>
            <person name="Suzuki M."/>
            <person name="Aoki J."/>
            <person name="Arakawa T."/>
            <person name="Iida J."/>
            <person name="Imamura K."/>
            <person name="Itoh M."/>
            <person name="Kato T."/>
            <person name="Kawaji H."/>
            <person name="Kawagashira N."/>
            <person name="Kawashima T."/>
            <person name="Kojima M."/>
            <person name="Kondo S."/>
            <person name="Konno H."/>
            <person name="Nakano K."/>
            <person name="Ninomiya N."/>
            <person name="Nishio T."/>
            <person name="Okada M."/>
            <person name="Plessy C."/>
            <person name="Shibata K."/>
            <person name="Shiraki T."/>
            <person name="Suzuki S."/>
            <person name="Tagami M."/>
            <person name="Waki K."/>
            <person name="Watahiki A."/>
            <person name="Okamura-Oho Y."/>
            <person name="Suzuki H."/>
            <person name="Kawai J."/>
            <person name="Hayashizaki Y."/>
        </authorList>
    </citation>
    <scope>NUCLEOTIDE SEQUENCE [LARGE SCALE MRNA]</scope>
    <source>
        <strain>C57BL/6J</strain>
        <tissue>Adipose tissue</tissue>
    </source>
</reference>
<reference key="2">
    <citation type="journal article" date="2013" name="Cell Res.">
        <title>Early estrogen-induced gene 1, a novel RANK signaling component, is essential for osteoclastogenesis.</title>
        <authorList>
            <person name="Choi H.K."/>
            <person name="Kang H.R."/>
            <person name="Jung E."/>
            <person name="Kim T.E."/>
            <person name="Lin J.J."/>
            <person name="Lee S.Y."/>
        </authorList>
    </citation>
    <scope>TISSUE SPECIFICITY</scope>
</reference>
<gene>
    <name type="primary">Eeig2</name>
    <name type="synonym">Fam102b</name>
</gene>
<proteinExistence type="evidence at transcript level"/>
<sequence>MRLLDGGSFTAESSREVVQANCVHWRKKFSFMCKMSASASTGILDPCIYRVSVRKELKGGKAYAKLGFADLNLAEFAGSGNTTRRCLLEGYDTKNTRQDNSILKVLISMQLMSGDPCFKTPPSTSMSIPIAGESESLEEDRKGGETLKVHLGIADLSAKSASVPDELGAWGHSRTSSYASQQSKVSGYSTCHSRSSSFSEFCHRRNTSVGSTSTGIESILEPCDETEPITAEPSPDPTAAAATATTTTAKEEEASEKLARCPVKQDSVESQLKRVDDTRVDADDIVEKILQSQDFSLDSSAEEEGLRLFVGPGGSTTFGSHHLPNRVGSGAYEQVVIKR</sequence>
<accession>Q8BQS4</accession>
<organism>
    <name type="scientific">Mus musculus</name>
    <name type="common">Mouse</name>
    <dbReference type="NCBI Taxonomy" id="10090"/>
    <lineage>
        <taxon>Eukaryota</taxon>
        <taxon>Metazoa</taxon>
        <taxon>Chordata</taxon>
        <taxon>Craniata</taxon>
        <taxon>Vertebrata</taxon>
        <taxon>Euteleostomi</taxon>
        <taxon>Mammalia</taxon>
        <taxon>Eutheria</taxon>
        <taxon>Euarchontoglires</taxon>
        <taxon>Glires</taxon>
        <taxon>Rodentia</taxon>
        <taxon>Myomorpha</taxon>
        <taxon>Muroidea</taxon>
        <taxon>Muridae</taxon>
        <taxon>Murinae</taxon>
        <taxon>Mus</taxon>
        <taxon>Mus</taxon>
    </lineage>
</organism>
<protein>
    <recommendedName>
        <fullName evidence="5">EEIG family member 2</fullName>
        <shortName>EEIG2</shortName>
    </recommendedName>
</protein>
<keyword id="KW-0597">Phosphoprotein</keyword>
<keyword id="KW-1185">Reference proteome</keyword>